<gene>
    <name evidence="1" type="primary">purC</name>
    <name type="ordered locus">BH09710</name>
</gene>
<accession>Q6G338</accession>
<keyword id="KW-0067">ATP-binding</keyword>
<keyword id="KW-0436">Ligase</keyword>
<keyword id="KW-0547">Nucleotide-binding</keyword>
<keyword id="KW-0658">Purine biosynthesis</keyword>
<evidence type="ECO:0000255" key="1">
    <source>
        <dbReference type="HAMAP-Rule" id="MF_00137"/>
    </source>
</evidence>
<reference key="1">
    <citation type="journal article" date="2004" name="Proc. Natl. Acad. Sci. U.S.A.">
        <title>The louse-borne human pathogen Bartonella quintana is a genomic derivative of the zoonotic agent Bartonella henselae.</title>
        <authorList>
            <person name="Alsmark U.C.M."/>
            <person name="Frank A.C."/>
            <person name="Karlberg E.O."/>
            <person name="Legault B.-A."/>
            <person name="Ardell D.H."/>
            <person name="Canbaeck B."/>
            <person name="Eriksson A.-S."/>
            <person name="Naeslund A.K."/>
            <person name="Handley S.A."/>
            <person name="Huvet M."/>
            <person name="La Scola B."/>
            <person name="Holmberg M."/>
            <person name="Andersson S.G.E."/>
        </authorList>
    </citation>
    <scope>NUCLEOTIDE SEQUENCE [LARGE SCALE GENOMIC DNA]</scope>
    <source>
        <strain>ATCC 49882 / DSM 28221 / CCUG 30454 / Houston 1</strain>
    </source>
</reference>
<protein>
    <recommendedName>
        <fullName evidence="1">Phosphoribosylaminoimidazole-succinocarboxamide synthase</fullName>
        <ecNumber evidence="1">6.3.2.6</ecNumber>
    </recommendedName>
    <alternativeName>
        <fullName evidence="1">SAICAR synthetase</fullName>
    </alternativeName>
</protein>
<proteinExistence type="inferred from homology"/>
<sequence>MNRRHRIYEGKAKILYEGPEPGTYIQFFKDDATAFNAKKHEIIDGKGVLNNRISEHIFSHLGRLGIPTHFIKRINMREQLIKAVEIIPLEVVVRNVAAGSLSKRLGLEEGTPLSQSIIEFYYKNDSLDDPMVSEEHITAFGWAVPQEIEDIMQLSIRINDFLSGLFAGVNIQLIDFKMEFGRLWEDEAMRIVLADEISPDSARLWDIQTQEKMDKDRFRRDMGGLINAYQEVAKRLGIINENEPSRPNGPVLVK</sequence>
<feature type="chain" id="PRO_1000018671" description="Phosphoribosylaminoimidazole-succinocarboxamide synthase">
    <location>
        <begin position="1"/>
        <end position="254"/>
    </location>
</feature>
<organism>
    <name type="scientific">Bartonella henselae (strain ATCC 49882 / DSM 28221 / CCUG 30454 / Houston 1)</name>
    <name type="common">Rochalimaea henselae</name>
    <dbReference type="NCBI Taxonomy" id="283166"/>
    <lineage>
        <taxon>Bacteria</taxon>
        <taxon>Pseudomonadati</taxon>
        <taxon>Pseudomonadota</taxon>
        <taxon>Alphaproteobacteria</taxon>
        <taxon>Hyphomicrobiales</taxon>
        <taxon>Bartonellaceae</taxon>
        <taxon>Bartonella</taxon>
    </lineage>
</organism>
<name>PUR7_BARHE</name>
<comment type="catalytic activity">
    <reaction evidence="1">
        <text>5-amino-1-(5-phospho-D-ribosyl)imidazole-4-carboxylate + L-aspartate + ATP = (2S)-2-[5-amino-1-(5-phospho-beta-D-ribosyl)imidazole-4-carboxamido]succinate + ADP + phosphate + 2 H(+)</text>
        <dbReference type="Rhea" id="RHEA:22628"/>
        <dbReference type="ChEBI" id="CHEBI:15378"/>
        <dbReference type="ChEBI" id="CHEBI:29991"/>
        <dbReference type="ChEBI" id="CHEBI:30616"/>
        <dbReference type="ChEBI" id="CHEBI:43474"/>
        <dbReference type="ChEBI" id="CHEBI:58443"/>
        <dbReference type="ChEBI" id="CHEBI:77657"/>
        <dbReference type="ChEBI" id="CHEBI:456216"/>
        <dbReference type="EC" id="6.3.2.6"/>
    </reaction>
</comment>
<comment type="pathway">
    <text evidence="1">Purine metabolism; IMP biosynthesis via de novo pathway; 5-amino-1-(5-phospho-D-ribosyl)imidazole-4-carboxamide from 5-amino-1-(5-phospho-D-ribosyl)imidazole-4-carboxylate: step 1/2.</text>
</comment>
<comment type="similarity">
    <text evidence="1">Belongs to the SAICAR synthetase family.</text>
</comment>
<dbReference type="EC" id="6.3.2.6" evidence="1"/>
<dbReference type="EMBL" id="BX897699">
    <property type="protein sequence ID" value="CAF27764.1"/>
    <property type="molecule type" value="Genomic_DNA"/>
</dbReference>
<dbReference type="RefSeq" id="WP_011180842.1">
    <property type="nucleotide sequence ID" value="NZ_LRIJ02000001.1"/>
</dbReference>
<dbReference type="SMR" id="Q6G338"/>
<dbReference type="PaxDb" id="283166-BH09710"/>
<dbReference type="EnsemblBacteria" id="CAF27764">
    <property type="protein sequence ID" value="CAF27764"/>
    <property type="gene ID" value="BH09710"/>
</dbReference>
<dbReference type="GeneID" id="92985338"/>
<dbReference type="KEGG" id="bhe:BH09710"/>
<dbReference type="eggNOG" id="COG0152">
    <property type="taxonomic scope" value="Bacteria"/>
</dbReference>
<dbReference type="OrthoDB" id="9801549at2"/>
<dbReference type="UniPathway" id="UPA00074">
    <property type="reaction ID" value="UER00131"/>
</dbReference>
<dbReference type="Proteomes" id="UP000000421">
    <property type="component" value="Chromosome"/>
</dbReference>
<dbReference type="GO" id="GO:0005829">
    <property type="term" value="C:cytosol"/>
    <property type="evidence" value="ECO:0007669"/>
    <property type="project" value="TreeGrafter"/>
</dbReference>
<dbReference type="GO" id="GO:0005524">
    <property type="term" value="F:ATP binding"/>
    <property type="evidence" value="ECO:0007669"/>
    <property type="project" value="UniProtKB-KW"/>
</dbReference>
<dbReference type="GO" id="GO:0004639">
    <property type="term" value="F:phosphoribosylaminoimidazolesuccinocarboxamide synthase activity"/>
    <property type="evidence" value="ECO:0007669"/>
    <property type="project" value="UniProtKB-UniRule"/>
</dbReference>
<dbReference type="GO" id="GO:0006189">
    <property type="term" value="P:'de novo' IMP biosynthetic process"/>
    <property type="evidence" value="ECO:0007669"/>
    <property type="project" value="UniProtKB-UniRule"/>
</dbReference>
<dbReference type="GO" id="GO:0009236">
    <property type="term" value="P:cobalamin biosynthetic process"/>
    <property type="evidence" value="ECO:0007669"/>
    <property type="project" value="InterPro"/>
</dbReference>
<dbReference type="CDD" id="cd01415">
    <property type="entry name" value="SAICAR_synt_PurC"/>
    <property type="match status" value="1"/>
</dbReference>
<dbReference type="FunFam" id="3.30.470.20:FF:000006">
    <property type="entry name" value="Phosphoribosylaminoimidazole-succinocarboxamide synthase"/>
    <property type="match status" value="1"/>
</dbReference>
<dbReference type="Gene3D" id="3.30.470.20">
    <property type="entry name" value="ATP-grasp fold, B domain"/>
    <property type="match status" value="1"/>
</dbReference>
<dbReference type="Gene3D" id="3.30.200.20">
    <property type="entry name" value="Phosphorylase Kinase, domain 1"/>
    <property type="match status" value="1"/>
</dbReference>
<dbReference type="HAMAP" id="MF_00137">
    <property type="entry name" value="SAICAR_synth"/>
    <property type="match status" value="1"/>
</dbReference>
<dbReference type="InterPro" id="IPR028923">
    <property type="entry name" value="SAICAR_synt/ADE2_N"/>
</dbReference>
<dbReference type="InterPro" id="IPR033934">
    <property type="entry name" value="SAICAR_synt_PurC"/>
</dbReference>
<dbReference type="InterPro" id="IPR001636">
    <property type="entry name" value="SAICAR_synth"/>
</dbReference>
<dbReference type="InterPro" id="IPR050089">
    <property type="entry name" value="SAICAR_synthetase"/>
</dbReference>
<dbReference type="InterPro" id="IPR018236">
    <property type="entry name" value="SAICAR_synthetase_CS"/>
</dbReference>
<dbReference type="NCBIfam" id="TIGR00081">
    <property type="entry name" value="purC"/>
    <property type="match status" value="1"/>
</dbReference>
<dbReference type="PANTHER" id="PTHR43599">
    <property type="entry name" value="MULTIFUNCTIONAL PROTEIN ADE2"/>
    <property type="match status" value="1"/>
</dbReference>
<dbReference type="PANTHER" id="PTHR43599:SF3">
    <property type="entry name" value="SI:DKEY-6E2.2"/>
    <property type="match status" value="1"/>
</dbReference>
<dbReference type="Pfam" id="PF01259">
    <property type="entry name" value="SAICAR_synt"/>
    <property type="match status" value="1"/>
</dbReference>
<dbReference type="SUPFAM" id="SSF56104">
    <property type="entry name" value="SAICAR synthase-like"/>
    <property type="match status" value="1"/>
</dbReference>
<dbReference type="PROSITE" id="PS01057">
    <property type="entry name" value="SAICAR_SYNTHETASE_1"/>
    <property type="match status" value="1"/>
</dbReference>